<keyword id="KW-0479">Metal-binding</keyword>
<keyword id="KW-0862">Zinc</keyword>
<comment type="function">
    <text evidence="1">Inhibits all the catalytic activities of DNA gyrase by preventing its interaction with DNA. Acts by binding directly to the C-terminal domain of GyrB, which probably disrupts DNA binding by the gyrase.</text>
</comment>
<comment type="cofactor">
    <cofactor evidence="1">
        <name>Zn(2+)</name>
        <dbReference type="ChEBI" id="CHEBI:29105"/>
    </cofactor>
    <text evidence="1">Binds 1 zinc ion.</text>
</comment>
<comment type="subunit">
    <text evidence="1">Interacts with GyrB.</text>
</comment>
<comment type="similarity">
    <text evidence="1">Belongs to the DNA gyrase inhibitor YacG family.</text>
</comment>
<organism>
    <name type="scientific">Shewanella sp. (strain ANA-3)</name>
    <dbReference type="NCBI Taxonomy" id="94122"/>
    <lineage>
        <taxon>Bacteria</taxon>
        <taxon>Pseudomonadati</taxon>
        <taxon>Pseudomonadota</taxon>
        <taxon>Gammaproteobacteria</taxon>
        <taxon>Alteromonadales</taxon>
        <taxon>Shewanellaceae</taxon>
        <taxon>Shewanella</taxon>
    </lineage>
</organism>
<proteinExistence type="inferred from homology"/>
<protein>
    <recommendedName>
        <fullName evidence="1">DNA gyrase inhibitor YacG</fullName>
    </recommendedName>
</protein>
<gene>
    <name evidence="1" type="primary">yacG</name>
    <name type="ordered locus">Shewana3_0414</name>
</gene>
<feature type="chain" id="PRO_1000056993" description="DNA gyrase inhibitor YacG">
    <location>
        <begin position="1"/>
        <end position="69"/>
    </location>
</feature>
<feature type="binding site" evidence="1">
    <location>
        <position position="7"/>
    </location>
    <ligand>
        <name>Zn(2+)</name>
        <dbReference type="ChEBI" id="CHEBI:29105"/>
    </ligand>
</feature>
<feature type="binding site" evidence="1">
    <location>
        <position position="10"/>
    </location>
    <ligand>
        <name>Zn(2+)</name>
        <dbReference type="ChEBI" id="CHEBI:29105"/>
    </ligand>
</feature>
<feature type="binding site" evidence="1">
    <location>
        <position position="26"/>
    </location>
    <ligand>
        <name>Zn(2+)</name>
        <dbReference type="ChEBI" id="CHEBI:29105"/>
    </ligand>
</feature>
<feature type="binding site" evidence="1">
    <location>
        <position position="30"/>
    </location>
    <ligand>
        <name>Zn(2+)</name>
        <dbReference type="ChEBI" id="CHEBI:29105"/>
    </ligand>
</feature>
<reference key="1">
    <citation type="submission" date="2006-09" db="EMBL/GenBank/DDBJ databases">
        <title>Complete sequence of chromosome 1 of Shewanella sp. ANA-3.</title>
        <authorList>
            <person name="Copeland A."/>
            <person name="Lucas S."/>
            <person name="Lapidus A."/>
            <person name="Barry K."/>
            <person name="Detter J.C."/>
            <person name="Glavina del Rio T."/>
            <person name="Hammon N."/>
            <person name="Israni S."/>
            <person name="Dalin E."/>
            <person name="Tice H."/>
            <person name="Pitluck S."/>
            <person name="Chertkov O."/>
            <person name="Brettin T."/>
            <person name="Bruce D."/>
            <person name="Han C."/>
            <person name="Tapia R."/>
            <person name="Gilna P."/>
            <person name="Schmutz J."/>
            <person name="Larimer F."/>
            <person name="Land M."/>
            <person name="Hauser L."/>
            <person name="Kyrpides N."/>
            <person name="Kim E."/>
            <person name="Newman D."/>
            <person name="Salticov C."/>
            <person name="Konstantinidis K."/>
            <person name="Klappenback J."/>
            <person name="Tiedje J."/>
            <person name="Richardson P."/>
        </authorList>
    </citation>
    <scope>NUCLEOTIDE SEQUENCE [LARGE SCALE GENOMIC DNA]</scope>
    <source>
        <strain>ANA-3</strain>
    </source>
</reference>
<sequence length="69" mass="7971">MPLTVNCPICKTPVEWVPQSEFKPFCSERCKMIDLGDWASEKHAIPVKSEFDLDALDELGYDEESFFKE</sequence>
<accession>A0KS88</accession>
<name>YACG_SHESA</name>
<dbReference type="EMBL" id="CP000469">
    <property type="protein sequence ID" value="ABK46657.1"/>
    <property type="molecule type" value="Genomic_DNA"/>
</dbReference>
<dbReference type="RefSeq" id="WP_011621218.1">
    <property type="nucleotide sequence ID" value="NC_008577.1"/>
</dbReference>
<dbReference type="SMR" id="A0KS88"/>
<dbReference type="STRING" id="94122.Shewana3_0414"/>
<dbReference type="GeneID" id="94726410"/>
<dbReference type="KEGG" id="shn:Shewana3_0414"/>
<dbReference type="eggNOG" id="COG3024">
    <property type="taxonomic scope" value="Bacteria"/>
</dbReference>
<dbReference type="HOGENOM" id="CLU_178280_1_0_6"/>
<dbReference type="OrthoDB" id="9809663at2"/>
<dbReference type="Proteomes" id="UP000002589">
    <property type="component" value="Chromosome"/>
</dbReference>
<dbReference type="GO" id="GO:0008657">
    <property type="term" value="F:DNA topoisomerase type II (double strand cut, ATP-hydrolyzing) inhibitor activity"/>
    <property type="evidence" value="ECO:0007669"/>
    <property type="project" value="UniProtKB-UniRule"/>
</dbReference>
<dbReference type="GO" id="GO:0008270">
    <property type="term" value="F:zinc ion binding"/>
    <property type="evidence" value="ECO:0007669"/>
    <property type="project" value="UniProtKB-UniRule"/>
</dbReference>
<dbReference type="GO" id="GO:0006355">
    <property type="term" value="P:regulation of DNA-templated transcription"/>
    <property type="evidence" value="ECO:0007669"/>
    <property type="project" value="InterPro"/>
</dbReference>
<dbReference type="Gene3D" id="3.30.50.10">
    <property type="entry name" value="Erythroid Transcription Factor GATA-1, subunit A"/>
    <property type="match status" value="1"/>
</dbReference>
<dbReference type="HAMAP" id="MF_00649">
    <property type="entry name" value="DNA_gyrase_inhibitor_YacG"/>
    <property type="match status" value="1"/>
</dbReference>
<dbReference type="InterPro" id="IPR005584">
    <property type="entry name" value="DNA_gyrase_inhibitor_YacG"/>
</dbReference>
<dbReference type="InterPro" id="IPR013088">
    <property type="entry name" value="Znf_NHR/GATA"/>
</dbReference>
<dbReference type="NCBIfam" id="NF001638">
    <property type="entry name" value="PRK00418.1"/>
    <property type="match status" value="1"/>
</dbReference>
<dbReference type="PANTHER" id="PTHR36150">
    <property type="entry name" value="DNA GYRASE INHIBITOR YACG"/>
    <property type="match status" value="1"/>
</dbReference>
<dbReference type="PANTHER" id="PTHR36150:SF1">
    <property type="entry name" value="DNA GYRASE INHIBITOR YACG"/>
    <property type="match status" value="1"/>
</dbReference>
<dbReference type="Pfam" id="PF03884">
    <property type="entry name" value="YacG"/>
    <property type="match status" value="1"/>
</dbReference>
<dbReference type="SUPFAM" id="SSF57716">
    <property type="entry name" value="Glucocorticoid receptor-like (DNA-binding domain)"/>
    <property type="match status" value="1"/>
</dbReference>
<evidence type="ECO:0000255" key="1">
    <source>
        <dbReference type="HAMAP-Rule" id="MF_00649"/>
    </source>
</evidence>